<gene>
    <name type="primary">Otub2</name>
</gene>
<organism>
    <name type="scientific">Mus musculus</name>
    <name type="common">Mouse</name>
    <dbReference type="NCBI Taxonomy" id="10090"/>
    <lineage>
        <taxon>Eukaryota</taxon>
        <taxon>Metazoa</taxon>
        <taxon>Chordata</taxon>
        <taxon>Craniata</taxon>
        <taxon>Vertebrata</taxon>
        <taxon>Euteleostomi</taxon>
        <taxon>Mammalia</taxon>
        <taxon>Eutheria</taxon>
        <taxon>Euarchontoglires</taxon>
        <taxon>Glires</taxon>
        <taxon>Rodentia</taxon>
        <taxon>Myomorpha</taxon>
        <taxon>Muroidea</taxon>
        <taxon>Muridae</taxon>
        <taxon>Murinae</taxon>
        <taxon>Mus</taxon>
        <taxon>Mus</taxon>
    </lineage>
</organism>
<keyword id="KW-0378">Hydrolase</keyword>
<keyword id="KW-0645">Protease</keyword>
<keyword id="KW-1185">Reference proteome</keyword>
<keyword id="KW-0788">Thiol protease</keyword>
<keyword id="KW-0833">Ubl conjugation pathway</keyword>
<evidence type="ECO:0000250" key="1"/>
<evidence type="ECO:0000250" key="2">
    <source>
        <dbReference type="UniProtKB" id="Q96DC9"/>
    </source>
</evidence>
<evidence type="ECO:0000250" key="3">
    <source>
        <dbReference type="UniProtKB" id="Q96FW1"/>
    </source>
</evidence>
<evidence type="ECO:0000255" key="4">
    <source>
        <dbReference type="PROSITE-ProRule" id="PRU00139"/>
    </source>
</evidence>
<evidence type="ECO:0000305" key="5"/>
<reference key="1">
    <citation type="journal article" date="2005" name="Science">
        <title>The transcriptional landscape of the mammalian genome.</title>
        <authorList>
            <person name="Carninci P."/>
            <person name="Kasukawa T."/>
            <person name="Katayama S."/>
            <person name="Gough J."/>
            <person name="Frith M.C."/>
            <person name="Maeda N."/>
            <person name="Oyama R."/>
            <person name="Ravasi T."/>
            <person name="Lenhard B."/>
            <person name="Wells C."/>
            <person name="Kodzius R."/>
            <person name="Shimokawa K."/>
            <person name="Bajic V.B."/>
            <person name="Brenner S.E."/>
            <person name="Batalov S."/>
            <person name="Forrest A.R."/>
            <person name="Zavolan M."/>
            <person name="Davis M.J."/>
            <person name="Wilming L.G."/>
            <person name="Aidinis V."/>
            <person name="Allen J.E."/>
            <person name="Ambesi-Impiombato A."/>
            <person name="Apweiler R."/>
            <person name="Aturaliya R.N."/>
            <person name="Bailey T.L."/>
            <person name="Bansal M."/>
            <person name="Baxter L."/>
            <person name="Beisel K.W."/>
            <person name="Bersano T."/>
            <person name="Bono H."/>
            <person name="Chalk A.M."/>
            <person name="Chiu K.P."/>
            <person name="Choudhary V."/>
            <person name="Christoffels A."/>
            <person name="Clutterbuck D.R."/>
            <person name="Crowe M.L."/>
            <person name="Dalla E."/>
            <person name="Dalrymple B.P."/>
            <person name="de Bono B."/>
            <person name="Della Gatta G."/>
            <person name="di Bernardo D."/>
            <person name="Down T."/>
            <person name="Engstrom P."/>
            <person name="Fagiolini M."/>
            <person name="Faulkner G."/>
            <person name="Fletcher C.F."/>
            <person name="Fukushima T."/>
            <person name="Furuno M."/>
            <person name="Futaki S."/>
            <person name="Gariboldi M."/>
            <person name="Georgii-Hemming P."/>
            <person name="Gingeras T.R."/>
            <person name="Gojobori T."/>
            <person name="Green R.E."/>
            <person name="Gustincich S."/>
            <person name="Harbers M."/>
            <person name="Hayashi Y."/>
            <person name="Hensch T.K."/>
            <person name="Hirokawa N."/>
            <person name="Hill D."/>
            <person name="Huminiecki L."/>
            <person name="Iacono M."/>
            <person name="Ikeo K."/>
            <person name="Iwama A."/>
            <person name="Ishikawa T."/>
            <person name="Jakt M."/>
            <person name="Kanapin A."/>
            <person name="Katoh M."/>
            <person name="Kawasawa Y."/>
            <person name="Kelso J."/>
            <person name="Kitamura H."/>
            <person name="Kitano H."/>
            <person name="Kollias G."/>
            <person name="Krishnan S.P."/>
            <person name="Kruger A."/>
            <person name="Kummerfeld S.K."/>
            <person name="Kurochkin I.V."/>
            <person name="Lareau L.F."/>
            <person name="Lazarevic D."/>
            <person name="Lipovich L."/>
            <person name="Liu J."/>
            <person name="Liuni S."/>
            <person name="McWilliam S."/>
            <person name="Madan Babu M."/>
            <person name="Madera M."/>
            <person name="Marchionni L."/>
            <person name="Matsuda H."/>
            <person name="Matsuzawa S."/>
            <person name="Miki H."/>
            <person name="Mignone F."/>
            <person name="Miyake S."/>
            <person name="Morris K."/>
            <person name="Mottagui-Tabar S."/>
            <person name="Mulder N."/>
            <person name="Nakano N."/>
            <person name="Nakauchi H."/>
            <person name="Ng P."/>
            <person name="Nilsson R."/>
            <person name="Nishiguchi S."/>
            <person name="Nishikawa S."/>
            <person name="Nori F."/>
            <person name="Ohara O."/>
            <person name="Okazaki Y."/>
            <person name="Orlando V."/>
            <person name="Pang K.C."/>
            <person name="Pavan W.J."/>
            <person name="Pavesi G."/>
            <person name="Pesole G."/>
            <person name="Petrovsky N."/>
            <person name="Piazza S."/>
            <person name="Reed J."/>
            <person name="Reid J.F."/>
            <person name="Ring B.Z."/>
            <person name="Ringwald M."/>
            <person name="Rost B."/>
            <person name="Ruan Y."/>
            <person name="Salzberg S.L."/>
            <person name="Sandelin A."/>
            <person name="Schneider C."/>
            <person name="Schoenbach C."/>
            <person name="Sekiguchi K."/>
            <person name="Semple C.A."/>
            <person name="Seno S."/>
            <person name="Sessa L."/>
            <person name="Sheng Y."/>
            <person name="Shibata Y."/>
            <person name="Shimada H."/>
            <person name="Shimada K."/>
            <person name="Silva D."/>
            <person name="Sinclair B."/>
            <person name="Sperling S."/>
            <person name="Stupka E."/>
            <person name="Sugiura K."/>
            <person name="Sultana R."/>
            <person name="Takenaka Y."/>
            <person name="Taki K."/>
            <person name="Tammoja K."/>
            <person name="Tan S.L."/>
            <person name="Tang S."/>
            <person name="Taylor M.S."/>
            <person name="Tegner J."/>
            <person name="Teichmann S.A."/>
            <person name="Ueda H.R."/>
            <person name="van Nimwegen E."/>
            <person name="Verardo R."/>
            <person name="Wei C.L."/>
            <person name="Yagi K."/>
            <person name="Yamanishi H."/>
            <person name="Zabarovsky E."/>
            <person name="Zhu S."/>
            <person name="Zimmer A."/>
            <person name="Hide W."/>
            <person name="Bult C."/>
            <person name="Grimmond S.M."/>
            <person name="Teasdale R.D."/>
            <person name="Liu E.T."/>
            <person name="Brusic V."/>
            <person name="Quackenbush J."/>
            <person name="Wahlestedt C."/>
            <person name="Mattick J.S."/>
            <person name="Hume D.A."/>
            <person name="Kai C."/>
            <person name="Sasaki D."/>
            <person name="Tomaru Y."/>
            <person name="Fukuda S."/>
            <person name="Kanamori-Katayama M."/>
            <person name="Suzuki M."/>
            <person name="Aoki J."/>
            <person name="Arakawa T."/>
            <person name="Iida J."/>
            <person name="Imamura K."/>
            <person name="Itoh M."/>
            <person name="Kato T."/>
            <person name="Kawaji H."/>
            <person name="Kawagashira N."/>
            <person name="Kawashima T."/>
            <person name="Kojima M."/>
            <person name="Kondo S."/>
            <person name="Konno H."/>
            <person name="Nakano K."/>
            <person name="Ninomiya N."/>
            <person name="Nishio T."/>
            <person name="Okada M."/>
            <person name="Plessy C."/>
            <person name="Shibata K."/>
            <person name="Shiraki T."/>
            <person name="Suzuki S."/>
            <person name="Tagami M."/>
            <person name="Waki K."/>
            <person name="Watahiki A."/>
            <person name="Okamura-Oho Y."/>
            <person name="Suzuki H."/>
            <person name="Kawai J."/>
            <person name="Hayashizaki Y."/>
        </authorList>
    </citation>
    <scope>NUCLEOTIDE SEQUENCE [LARGE SCALE MRNA]</scope>
    <source>
        <strain>C57BL/6J</strain>
        <tissue>Testis</tissue>
        <tissue>Tongue</tissue>
    </source>
</reference>
<reference key="2">
    <citation type="journal article" date="2004" name="Genome Res.">
        <title>The status, quality, and expansion of the NIH full-length cDNA project: the Mammalian Gene Collection (MGC).</title>
        <authorList>
            <consortium name="The MGC Project Team"/>
        </authorList>
    </citation>
    <scope>NUCLEOTIDE SEQUENCE [LARGE SCALE MRNA]</scope>
    <source>
        <tissue>Testis</tissue>
    </source>
</reference>
<reference key="3">
    <citation type="journal article" date="2010" name="Cell">
        <title>A tissue-specific atlas of mouse protein phosphorylation and expression.</title>
        <authorList>
            <person name="Huttlin E.L."/>
            <person name="Jedrychowski M.P."/>
            <person name="Elias J.E."/>
            <person name="Goswami T."/>
            <person name="Rad R."/>
            <person name="Beausoleil S.A."/>
            <person name="Villen J."/>
            <person name="Haas W."/>
            <person name="Sowa M.E."/>
            <person name="Gygi S.P."/>
        </authorList>
    </citation>
    <scope>IDENTIFICATION BY MASS SPECTROMETRY [LARGE SCALE ANALYSIS]</scope>
    <source>
        <tissue>Spleen</tissue>
    </source>
</reference>
<name>OTUB2_MOUSE</name>
<comment type="function">
    <text evidence="1">Hydrolase that can remove conjugated ubiquitin from proteins in vitro and may therefore play an important regulatory role at the level of protein turnover by preventing degradation. Mediates deubiquitination of 'Lys-11'-,'Lys-48'- and 'Lys-63'-linked polyubiquitin chains, with a preference for 'Lys-63'-linked polyubiquitin chains (By similarity).</text>
</comment>
<comment type="catalytic activity">
    <reaction evidence="2">
        <text>Thiol-dependent hydrolysis of ester, thioester, amide, peptide and isopeptide bonds formed by the C-terminal Gly of ubiquitin (a 76-residue protein attached to proteins as an intracellular targeting signal).</text>
        <dbReference type="EC" id="3.4.19.12"/>
    </reaction>
</comment>
<comment type="similarity">
    <text evidence="5">Belongs to the peptidase C65 family.</text>
</comment>
<sequence length="234" mass="27300">MSETSFNLISEKCDILSILRDHPENRIYQRKIQELSKRFTSIRKTKGDGNCFYRALGYSYLESLLGKSREILKFKERVLQTPNDLLAAGFEEHKFRNFFNAFYSVVELVEKDSSVSSLLKVFNDQSSSDRIVQFLRLLTSAFIRNRADFFRHFIDEEMDIKDFCTHEVEPMAMECDHVQITALSQALNIALQVEYVDEMDTALNHHVFPEAAIPSVYLLYKTSHYNILYAAEKH</sequence>
<dbReference type="EC" id="3.4.19.12" evidence="2"/>
<dbReference type="EMBL" id="AK006054">
    <property type="protein sequence ID" value="BAB24385.1"/>
    <property type="molecule type" value="mRNA"/>
</dbReference>
<dbReference type="EMBL" id="AK006346">
    <property type="protein sequence ID" value="BAB24539.1"/>
    <property type="molecule type" value="mRNA"/>
</dbReference>
<dbReference type="EMBL" id="AK006469">
    <property type="protein sequence ID" value="BAB24603.1"/>
    <property type="molecule type" value="mRNA"/>
</dbReference>
<dbReference type="EMBL" id="AK019830">
    <property type="protein sequence ID" value="BAB31872.1"/>
    <property type="molecule type" value="mRNA"/>
</dbReference>
<dbReference type="EMBL" id="AK160505">
    <property type="protein sequence ID" value="BAE35829.1"/>
    <property type="molecule type" value="mRNA"/>
</dbReference>
<dbReference type="EMBL" id="BC049551">
    <property type="protein sequence ID" value="AAH49551.1"/>
    <property type="molecule type" value="mRNA"/>
</dbReference>
<dbReference type="CCDS" id="CCDS36528.1"/>
<dbReference type="RefSeq" id="NP_001171312.1">
    <property type="nucleotide sequence ID" value="NM_001177841.1"/>
</dbReference>
<dbReference type="RefSeq" id="NP_080856.1">
    <property type="nucleotide sequence ID" value="NM_026580.5"/>
</dbReference>
<dbReference type="SMR" id="Q9CQX0"/>
<dbReference type="FunCoup" id="Q9CQX0">
    <property type="interactions" value="1041"/>
</dbReference>
<dbReference type="STRING" id="10090.ENSMUSP00000098655"/>
<dbReference type="iPTMnet" id="Q9CQX0"/>
<dbReference type="PhosphoSitePlus" id="Q9CQX0"/>
<dbReference type="PaxDb" id="10090-ENSMUSP00000021620"/>
<dbReference type="ProteomicsDB" id="295490"/>
<dbReference type="Pumba" id="Q9CQX0"/>
<dbReference type="Antibodypedia" id="103">
    <property type="antibodies" value="418 antibodies from 32 providers"/>
</dbReference>
<dbReference type="DNASU" id="68149"/>
<dbReference type="Ensembl" id="ENSMUST00000021620.13">
    <property type="protein sequence ID" value="ENSMUSP00000021620.7"/>
    <property type="gene ID" value="ENSMUSG00000021203.16"/>
</dbReference>
<dbReference type="GeneID" id="68149"/>
<dbReference type="KEGG" id="mmu:68149"/>
<dbReference type="UCSC" id="uc007ovg.2">
    <property type="organism name" value="mouse"/>
</dbReference>
<dbReference type="AGR" id="MGI:1915399"/>
<dbReference type="CTD" id="78990"/>
<dbReference type="MGI" id="MGI:1915399">
    <property type="gene designation" value="Otub2"/>
</dbReference>
<dbReference type="VEuPathDB" id="HostDB:ENSMUSG00000021203"/>
<dbReference type="eggNOG" id="KOG3991">
    <property type="taxonomic scope" value="Eukaryota"/>
</dbReference>
<dbReference type="GeneTree" id="ENSGT00390000006979"/>
<dbReference type="HOGENOM" id="CLU_014832_3_2_1"/>
<dbReference type="InParanoid" id="Q9CQX0"/>
<dbReference type="OMA" id="KVYCRQE"/>
<dbReference type="OrthoDB" id="18915at2759"/>
<dbReference type="PhylomeDB" id="Q9CQX0"/>
<dbReference type="TreeFam" id="TF314145"/>
<dbReference type="Reactome" id="R-MMU-5689896">
    <property type="pathway name" value="Ovarian tumor domain proteases"/>
</dbReference>
<dbReference type="BioGRID-ORCS" id="68149">
    <property type="hits" value="5 hits in 82 CRISPR screens"/>
</dbReference>
<dbReference type="ChiTaRS" id="Otub2">
    <property type="organism name" value="mouse"/>
</dbReference>
<dbReference type="PRO" id="PR:Q9CQX0"/>
<dbReference type="Proteomes" id="UP000000589">
    <property type="component" value="Chromosome 12"/>
</dbReference>
<dbReference type="RNAct" id="Q9CQX0">
    <property type="molecule type" value="protein"/>
</dbReference>
<dbReference type="Bgee" id="ENSMUSG00000021203">
    <property type="expression patterns" value="Expressed in seminiferous tubule of testis and 211 other cell types or tissues"/>
</dbReference>
<dbReference type="ExpressionAtlas" id="Q9CQX0">
    <property type="expression patterns" value="baseline and differential"/>
</dbReference>
<dbReference type="GO" id="GO:0004843">
    <property type="term" value="F:cysteine-type deubiquitinase activity"/>
    <property type="evidence" value="ECO:0000250"/>
    <property type="project" value="UniProtKB"/>
</dbReference>
<dbReference type="GO" id="GO:0016579">
    <property type="term" value="P:protein deubiquitination"/>
    <property type="evidence" value="ECO:0000250"/>
    <property type="project" value="UniProtKB"/>
</dbReference>
<dbReference type="GO" id="GO:0035871">
    <property type="term" value="P:protein K11-linked deubiquitination"/>
    <property type="evidence" value="ECO:0000250"/>
    <property type="project" value="UniProtKB"/>
</dbReference>
<dbReference type="GO" id="GO:0071108">
    <property type="term" value="P:protein K48-linked deubiquitination"/>
    <property type="evidence" value="ECO:0000250"/>
    <property type="project" value="UniProtKB"/>
</dbReference>
<dbReference type="GO" id="GO:0070536">
    <property type="term" value="P:protein K63-linked deubiquitination"/>
    <property type="evidence" value="ECO:0000250"/>
    <property type="project" value="UniProtKB"/>
</dbReference>
<dbReference type="GO" id="GO:0006508">
    <property type="term" value="P:proteolysis"/>
    <property type="evidence" value="ECO:0007669"/>
    <property type="project" value="UniProtKB-KW"/>
</dbReference>
<dbReference type="CDD" id="cd22764">
    <property type="entry name" value="OTUB2"/>
    <property type="match status" value="1"/>
</dbReference>
<dbReference type="FunFam" id="1.20.1300.20:FF:000001">
    <property type="entry name" value="Ubiquitin thioesterase OTUB1"/>
    <property type="match status" value="1"/>
</dbReference>
<dbReference type="Gene3D" id="3.30.200.60">
    <property type="entry name" value="Peptidase C65 Otubain, subdomain 1"/>
    <property type="match status" value="1"/>
</dbReference>
<dbReference type="Gene3D" id="1.20.1300.20">
    <property type="entry name" value="Peptidase C65 Otubain, subdomain 2"/>
    <property type="match status" value="1"/>
</dbReference>
<dbReference type="InterPro" id="IPR003323">
    <property type="entry name" value="OTU_dom"/>
</dbReference>
<dbReference type="InterPro" id="IPR016615">
    <property type="entry name" value="Otubain"/>
</dbReference>
<dbReference type="InterPro" id="IPR038765">
    <property type="entry name" value="Papain-like_cys_pep_sf"/>
</dbReference>
<dbReference type="InterPro" id="IPR019400">
    <property type="entry name" value="Peptidase_C65_otubain"/>
</dbReference>
<dbReference type="InterPro" id="IPR042468">
    <property type="entry name" value="Peptidase_C65_otubain_sub1"/>
</dbReference>
<dbReference type="InterPro" id="IPR042467">
    <property type="entry name" value="Peptidase_C65_otubain_sub2"/>
</dbReference>
<dbReference type="PANTHER" id="PTHR12931:SF3">
    <property type="entry name" value="UBIQUITIN THIOESTERASE OTUB2"/>
    <property type="match status" value="1"/>
</dbReference>
<dbReference type="PANTHER" id="PTHR12931">
    <property type="entry name" value="UBIQUITIN THIOLESTERASE PROTEIN OTUB"/>
    <property type="match status" value="1"/>
</dbReference>
<dbReference type="Pfam" id="PF10275">
    <property type="entry name" value="Peptidase_C65"/>
    <property type="match status" value="1"/>
</dbReference>
<dbReference type="PIRSF" id="PIRSF013503">
    <property type="entry name" value="Ubiquitin_thioesterase_Otubain"/>
    <property type="match status" value="1"/>
</dbReference>
<dbReference type="SUPFAM" id="SSF54001">
    <property type="entry name" value="Cysteine proteinases"/>
    <property type="match status" value="1"/>
</dbReference>
<dbReference type="PROSITE" id="PS50802">
    <property type="entry name" value="OTU"/>
    <property type="match status" value="1"/>
</dbReference>
<feature type="chain" id="PRO_0000221011" description="Ubiquitin thioesterase OTUB2">
    <location>
        <begin position="1"/>
        <end position="234"/>
    </location>
</feature>
<feature type="domain" description="OTU" evidence="4">
    <location>
        <begin position="40"/>
        <end position="231"/>
    </location>
</feature>
<feature type="active site" evidence="2">
    <location>
        <position position="48"/>
    </location>
</feature>
<feature type="active site" description="Nucleophile" evidence="2">
    <location>
        <position position="51"/>
    </location>
</feature>
<feature type="active site" evidence="3">
    <location>
        <position position="205"/>
    </location>
</feature>
<feature type="active site" evidence="2">
    <location>
        <position position="224"/>
    </location>
</feature>
<feature type="site" description="Required to orient and stabilize the active site H-224" evidence="2">
    <location>
        <position position="226"/>
    </location>
</feature>
<proteinExistence type="evidence at protein level"/>
<protein>
    <recommendedName>
        <fullName>Ubiquitin thioesterase OTUB2</fullName>
        <ecNumber evidence="2">3.4.19.12</ecNumber>
    </recommendedName>
    <alternativeName>
        <fullName>Deubiquitinating enzyme OTUB2</fullName>
    </alternativeName>
    <alternativeName>
        <fullName>OTU domain-containing ubiquitin aldehyde-binding protein 2</fullName>
    </alternativeName>
    <alternativeName>
        <fullName>Otubain-2</fullName>
    </alternativeName>
    <alternativeName>
        <fullName>Ubiquitin-specific-processing protease OTUB2</fullName>
    </alternativeName>
</protein>
<accession>Q9CQX0</accession>
<accession>Q3TUZ2</accession>
<accession>Q9D4K8</accession>